<evidence type="ECO:0000256" key="1">
    <source>
        <dbReference type="SAM" id="MobiDB-lite"/>
    </source>
</evidence>
<evidence type="ECO:0000305" key="2"/>
<comment type="subcellular location">
    <subcellularLocation>
        <location>Mitochondrion</location>
    </subcellularLocation>
</comment>
<comment type="similarity">
    <text evidence="2">Belongs to the universal ribosomal protein uS3 family.</text>
</comment>
<gene>
    <name type="primary">RPS3</name>
</gene>
<sequence length="555" mass="64104">MARKGNPISVRLGKNRSSDSSRFSEYYYGKFVYQDVNLRSYFGSIRPPTRLTFGFRLGRCILLHFPKRTFIHFFLPRRPRRLKRREKTRPGKEKGRWWTTPGKAGPIGCLRDDTEEERNEVRGRGARKRVESIRLDDRKKQNEIRGWPKKKQRYGYHDRTPSIKKNLSKSLRISGAFKHPKYGGVVNDIAFLIENDDSFRKTKLFKFFFPKKSRSDGPTSYLRTLPAVGPSLNFLVMQYFFNTKNQMNFDPVVVLNHFVAPGAAEPSTMGRANGTGDRSLQKRIRSRIAFFVESSTSEKKCLAEAKNRLTHLIRLANDLGFAGTTKTTISLFPFFGATFFFLRDGVGVTNNLDAREQLLNQLRVKCWNLLGKDKVMELIEKFKDLGGIEELIKVIDMMIEIILRKRGIPYGYNSYFNEVQKMRSFLSNRTNTKTLIESVKIKSVYQSASLIAQDISFQLKNKRRSTHSIFAKIVKEIPKRVEGIRICFSGRLKDAAEKAQTKCYKHRKTSRNVFNQKIDYAPAEVSTRYGISGVKVWISYSQKKGGRAISETYEI</sequence>
<accession>P49386</accession>
<name>RT03_BRANA</name>
<dbReference type="EMBL" id="X68726">
    <property type="status" value="NOT_ANNOTATED_CDS"/>
    <property type="molecule type" value="Genomic_DNA"/>
</dbReference>
<dbReference type="PIR" id="S36913">
    <property type="entry name" value="S36913"/>
</dbReference>
<dbReference type="SMR" id="P49386"/>
<dbReference type="GO" id="GO:0005739">
    <property type="term" value="C:mitochondrion"/>
    <property type="evidence" value="ECO:0007669"/>
    <property type="project" value="UniProtKB-SubCell"/>
</dbReference>
<dbReference type="GO" id="GO:1990904">
    <property type="term" value="C:ribonucleoprotein complex"/>
    <property type="evidence" value="ECO:0007669"/>
    <property type="project" value="UniProtKB-KW"/>
</dbReference>
<dbReference type="GO" id="GO:0005840">
    <property type="term" value="C:ribosome"/>
    <property type="evidence" value="ECO:0007669"/>
    <property type="project" value="UniProtKB-KW"/>
</dbReference>
<dbReference type="GO" id="GO:0003723">
    <property type="term" value="F:RNA binding"/>
    <property type="evidence" value="ECO:0007669"/>
    <property type="project" value="InterPro"/>
</dbReference>
<dbReference type="GO" id="GO:0003735">
    <property type="term" value="F:structural constituent of ribosome"/>
    <property type="evidence" value="ECO:0007669"/>
    <property type="project" value="InterPro"/>
</dbReference>
<dbReference type="GO" id="GO:0006412">
    <property type="term" value="P:translation"/>
    <property type="evidence" value="ECO:0007669"/>
    <property type="project" value="InterPro"/>
</dbReference>
<dbReference type="Gene3D" id="3.30.1140.32">
    <property type="entry name" value="Ribosomal protein S3, C-terminal domain"/>
    <property type="match status" value="1"/>
</dbReference>
<dbReference type="InterPro" id="IPR009019">
    <property type="entry name" value="KH_sf_prok-type"/>
</dbReference>
<dbReference type="InterPro" id="IPR036419">
    <property type="entry name" value="Ribosomal_S3_C_sf"/>
</dbReference>
<dbReference type="InterPro" id="IPR001351">
    <property type="entry name" value="Ribosomal_uS3_C"/>
</dbReference>
<dbReference type="InterPro" id="IPR044954">
    <property type="entry name" value="Ribosomal_uS3m_plant"/>
</dbReference>
<dbReference type="PANTHER" id="PTHR35928">
    <property type="entry name" value="RIBOSOMAL PROTEIN S3, MITOCHONDRIAL"/>
    <property type="match status" value="1"/>
</dbReference>
<dbReference type="PANTHER" id="PTHR35928:SF2">
    <property type="entry name" value="SMALL RIBOSOMAL SUBUNIT PROTEIN US3M"/>
    <property type="match status" value="1"/>
</dbReference>
<dbReference type="Pfam" id="PF00189">
    <property type="entry name" value="Ribosomal_S3_C"/>
    <property type="match status" value="1"/>
</dbReference>
<dbReference type="SUPFAM" id="SSF54814">
    <property type="entry name" value="Prokaryotic type KH domain (KH-domain type II)"/>
    <property type="match status" value="1"/>
</dbReference>
<dbReference type="SUPFAM" id="SSF54821">
    <property type="entry name" value="Ribosomal protein S3 C-terminal domain"/>
    <property type="match status" value="1"/>
</dbReference>
<protein>
    <recommendedName>
        <fullName evidence="2">Small ribosomal subunit protein uS3m</fullName>
    </recommendedName>
    <alternativeName>
        <fullName>Ribosomal protein S3, mitochondrial</fullName>
    </alternativeName>
</protein>
<proteinExistence type="inferred from homology"/>
<feature type="chain" id="PRO_0000130311" description="Small ribosomal subunit protein uS3m">
    <location>
        <begin position="1"/>
        <end position="555"/>
    </location>
</feature>
<feature type="region of interest" description="Disordered" evidence="1">
    <location>
        <begin position="1"/>
        <end position="20"/>
    </location>
</feature>
<keyword id="KW-0496">Mitochondrion</keyword>
<keyword id="KW-0687">Ribonucleoprotein</keyword>
<keyword id="KW-0689">Ribosomal protein</keyword>
<organism>
    <name type="scientific">Brassica napus</name>
    <name type="common">Rape</name>
    <dbReference type="NCBI Taxonomy" id="3708"/>
    <lineage>
        <taxon>Eukaryota</taxon>
        <taxon>Viridiplantae</taxon>
        <taxon>Streptophyta</taxon>
        <taxon>Embryophyta</taxon>
        <taxon>Tracheophyta</taxon>
        <taxon>Spermatophyta</taxon>
        <taxon>Magnoliopsida</taxon>
        <taxon>eudicotyledons</taxon>
        <taxon>Gunneridae</taxon>
        <taxon>Pentapetalae</taxon>
        <taxon>rosids</taxon>
        <taxon>malvids</taxon>
        <taxon>Brassicales</taxon>
        <taxon>Brassicaceae</taxon>
        <taxon>Brassiceae</taxon>
        <taxon>Brassica</taxon>
    </lineage>
</organism>
<reference key="1">
    <citation type="journal article" date="1993" name="Curr. Genet.">
        <title>Genes for ribosomal proteins S3, L16, L5 and S14 are clustered in the mitochondrial genome of Brassica napus L.</title>
        <authorList>
            <person name="Ye F."/>
            <person name="Bernhardt J."/>
            <person name="Abel W.O."/>
        </authorList>
    </citation>
    <scope>NUCLEOTIDE SEQUENCE [GENOMIC DNA]</scope>
    <source>
        <tissue>Leaf</tissue>
    </source>
</reference>
<geneLocation type="mitochondrion"/>